<sequence length="1870" mass="210038">MDFSTMQVVVGFLKTSMGLQSIRDIVQKAKVDEKDKTLLHIHLCFFHANEMARDLNEGMDVSQIHSSAAIKYRAAIVTRHVKMNVETGGYDRKRMVEYNNETCVNWFSCEFKEEKEESQELPVDEDCVEEIVENFLENCGISDQNDQISTTSNANYAFGQGLYEYATRVSDAIVAVISGSIKKGIDEFLDKVYAAMSQIFAAWMPKIRAAFQWFENIKEVVKNWARTMHEKINCILVGMEDCLYMGAGLVAATCIVTLLEKFMVVTKILPAPCGAATLFLTTAMATISAAYVCTKAVEKSVMLTNVLHFVTTNCQIVLNALFNHDATKKELGANQNEGEAPTGVGQFGISTMLQDVANLMSTWSTNSVTEIGRTFGAISQIKNGILALRDMVYFVFEKLSDLAHKVLGFESQVLADLTILLGENVADWLSECDCMVSYMLEFNSRNREIFDRLSQLIEKGRLIRTGVLRTGHRGSSQVMALVTKALEKLIELHNSVVMSGSNTTRKAPFMVFFTGASGTGKTSVVQRVAINWLQEEQLGTNEIYSRNGQDPFWSGYKRHAVVTYDDFGAVPGTTSNEAEIINVISRNPYATVMAGLAEKGMYFDSRLVLASRNFLAANPESGVHDSEAYERRRHAVIRVSLKPGVPYNADDPCANQTYTLLDSKTPFREIQTFETYAELWSYLYTSFKEHEVQEELYLKSLPILDSDKKEALEGLVGLTVIATSFAPKAVMQYGMEKFPGHHFLVSDGEKCYFWHGDGSVESASVEQMQLSKQDVAQLKQQGLSTAMMYKDLAKAFPTLNSLAVLYAKNIVVKRWVGPDLEPTKTCEDVYMREQIGNLPKWQRAYLYVLSKYLTTQSPRGWFMECLEETKKNLRATYLWEYKQWPLPLKLALGSLIAIMAGGAIWYSLQSLWCMSGDASFVAGAATVFSVSSFAGQSDIPNRDNSERSFRNRKVRARTWQGQSSCFGDSALWIAETCMATLTFSNVRTQVCLAPGRGFFGVNHCLAAIPAGVMVKMDSSIGVTYFVWGKEKLLQFDGNEIALYMTSTLPKTVDSLLGRIHFDVETLPKTFSAVFFSYKYDPMIQQMVPELGSVTCKVHNKAYTLAHGEYRREIPQSLSYEASTVAGDCGSLILAEIEGKFKLVGMHVAFNGREGSASFMPYHASLDQKVGQGDFMLKYQEWAEPKILGPGCRAMGLIDPEHALAASGKTTFVETPEEWHLDYPCDKLPSVLARGDPRLAGTVHADYDPFASGMSKYAKEAGPFDAASLKQVCSGIVEIWEDASADFPMDEVDLDTAINGLENVEFFDALVLGTSEGFPYRLDRGPGDKGKSRYVSGESGSLKITDEGVLSDIAWFEEVSKTQVPDLYCIECVKDERLPIRKVLHEPKSRLFTVLPMSYNIVIRKKFLNFVRFFMKRRDVLTAQVGINPYSREWTRMANKLLSKGNNILCCDYSRFDGFLPKCIMNEIGNMIARLMKTDEVSRTQIKNLMLACTSRYAMCNRVLYRVENGIPSGFPLTVIVNSILNEILVKYAYWHCFEDNPSVQSNFDAHVSMVVYGDDNLISVSDAISSRFDGNFLVSFMEGLGIKVTDGIDKTKVGIEFRRLENCDFLKRSFKMSPDGTWRSPMSKESLWPQLHFVKAKKLEMAEAYINNCNNILRELWLHDVKEAEEFRNKVLRNLRWIGHEQLLNMQQLAVFHSEQMNGVSDFLSTCVTVDSIPLMDPLVPGMLPVKTSEIIPRVFVAAEKHFEGNFNDFFTISITTSRKFEEDKGFVLLFPYGAGRGGLPTTQFMRENVIRKGCSIQKKFRQAYEKGNNILFISQSSVVPSYVFAVMLLHSIGAISRLSSNKALTQAMQTCKRLEYLPKEYEEFF</sequence>
<protein>
    <recommendedName>
        <fullName>RNA1 polyprotein</fullName>
    </recommendedName>
    <alternativeName>
        <fullName>Genome polyprotein B</fullName>
    </alternativeName>
    <component>
        <recommendedName>
            <fullName>Protease cofactor</fullName>
        </recommendedName>
    </component>
    <component>
        <recommendedName>
            <fullName>Putative helicase</fullName>
            <ecNumber>3.6.4.-</ecNumber>
        </recommendedName>
        <alternativeName>
            <fullName>Membrane-binding protein</fullName>
        </alternativeName>
        <alternativeName>
            <fullName>NTP-binding protein</fullName>
            <shortName>NTB</shortName>
        </alternativeName>
    </component>
    <component>
        <recommendedName>
            <fullName>Viral genome-linked protein</fullName>
        </recommendedName>
        <alternativeName>
            <fullName>VPg</fullName>
        </alternativeName>
    </component>
    <component>
        <recommendedName>
            <fullName>Picornain 3C-like protease</fullName>
            <shortName>3C-like protease</shortName>
            <ecNumber evidence="1">3.4.22.-</ecNumber>
        </recommendedName>
    </component>
    <component>
        <recommendedName>
            <fullName evidence="3">RNA-directed RNA polymerase</fullName>
            <ecNumber evidence="3">2.7.7.48</ecNumber>
        </recommendedName>
    </component>
</protein>
<dbReference type="EC" id="3.6.4.-"/>
<dbReference type="EC" id="3.4.22.-" evidence="1"/>
<dbReference type="EC" id="2.7.7.48" evidence="3"/>
<dbReference type="EMBL" id="AF149425">
    <property type="protein sequence ID" value="AAD39217.1"/>
    <property type="molecule type" value="Genomic_RNA"/>
</dbReference>
<dbReference type="SMR" id="Q9WNW0"/>
<dbReference type="GO" id="GO:0044165">
    <property type="term" value="C:host cell endoplasmic reticulum"/>
    <property type="evidence" value="ECO:0007669"/>
    <property type="project" value="UniProtKB-SubCell"/>
</dbReference>
<dbReference type="GO" id="GO:0033644">
    <property type="term" value="C:host cell membrane"/>
    <property type="evidence" value="ECO:0007669"/>
    <property type="project" value="UniProtKB-SubCell"/>
</dbReference>
<dbReference type="GO" id="GO:0044220">
    <property type="term" value="C:host cell perinuclear region of cytoplasm"/>
    <property type="evidence" value="ECO:0007669"/>
    <property type="project" value="UniProtKB-SubCell"/>
</dbReference>
<dbReference type="GO" id="GO:0016020">
    <property type="term" value="C:membrane"/>
    <property type="evidence" value="ECO:0007669"/>
    <property type="project" value="UniProtKB-KW"/>
</dbReference>
<dbReference type="GO" id="GO:0005524">
    <property type="term" value="F:ATP binding"/>
    <property type="evidence" value="ECO:0007669"/>
    <property type="project" value="UniProtKB-KW"/>
</dbReference>
<dbReference type="GO" id="GO:0004197">
    <property type="term" value="F:cysteine-type endopeptidase activity"/>
    <property type="evidence" value="ECO:0007669"/>
    <property type="project" value="InterPro"/>
</dbReference>
<dbReference type="GO" id="GO:0003723">
    <property type="term" value="F:RNA binding"/>
    <property type="evidence" value="ECO:0007669"/>
    <property type="project" value="InterPro"/>
</dbReference>
<dbReference type="GO" id="GO:0003724">
    <property type="term" value="F:RNA helicase activity"/>
    <property type="evidence" value="ECO:0007669"/>
    <property type="project" value="InterPro"/>
</dbReference>
<dbReference type="GO" id="GO:0003968">
    <property type="term" value="F:RNA-directed RNA polymerase activity"/>
    <property type="evidence" value="ECO:0007669"/>
    <property type="project" value="UniProtKB-KW"/>
</dbReference>
<dbReference type="GO" id="GO:0006351">
    <property type="term" value="P:DNA-templated transcription"/>
    <property type="evidence" value="ECO:0007669"/>
    <property type="project" value="InterPro"/>
</dbReference>
<dbReference type="GO" id="GO:0006508">
    <property type="term" value="P:proteolysis"/>
    <property type="evidence" value="ECO:0007669"/>
    <property type="project" value="UniProtKB-KW"/>
</dbReference>
<dbReference type="GO" id="GO:0039694">
    <property type="term" value="P:viral RNA genome replication"/>
    <property type="evidence" value="ECO:0007669"/>
    <property type="project" value="InterPro"/>
</dbReference>
<dbReference type="Gene3D" id="1.20.960.20">
    <property type="match status" value="1"/>
</dbReference>
<dbReference type="Gene3D" id="3.30.70.270">
    <property type="match status" value="1"/>
</dbReference>
<dbReference type="Gene3D" id="2.40.10.10">
    <property type="entry name" value="Trypsin-like serine proteases"/>
    <property type="match status" value="1"/>
</dbReference>
<dbReference type="InterPro" id="IPR043502">
    <property type="entry name" value="DNA/RNA_pol_sf"/>
</dbReference>
<dbReference type="InterPro" id="IPR004004">
    <property type="entry name" value="Helic/Pol/Pept_Calicivir-typ"/>
</dbReference>
<dbReference type="InterPro" id="IPR000605">
    <property type="entry name" value="Helicase_SF3_ssDNA/RNA_vir"/>
</dbReference>
<dbReference type="InterPro" id="IPR014759">
    <property type="entry name" value="Helicase_SF3_ssRNA_vir"/>
</dbReference>
<dbReference type="InterPro" id="IPR044067">
    <property type="entry name" value="PCV_3C_PRO"/>
</dbReference>
<dbReference type="InterPro" id="IPR000199">
    <property type="entry name" value="Peptidase_C3A/C3B_picornavir"/>
</dbReference>
<dbReference type="InterPro" id="IPR009003">
    <property type="entry name" value="Peptidase_S1_PA"/>
</dbReference>
<dbReference type="InterPro" id="IPR043504">
    <property type="entry name" value="Peptidase_S1_PA_chymotrypsin"/>
</dbReference>
<dbReference type="InterPro" id="IPR043128">
    <property type="entry name" value="Rev_trsase/Diguanyl_cyclase"/>
</dbReference>
<dbReference type="InterPro" id="IPR001205">
    <property type="entry name" value="RNA-dir_pol_C"/>
</dbReference>
<dbReference type="InterPro" id="IPR007094">
    <property type="entry name" value="RNA-dir_pol_PSvirus"/>
</dbReference>
<dbReference type="Pfam" id="PF00548">
    <property type="entry name" value="Peptidase_C3"/>
    <property type="match status" value="1"/>
</dbReference>
<dbReference type="Pfam" id="PF00680">
    <property type="entry name" value="RdRP_1"/>
    <property type="match status" value="1"/>
</dbReference>
<dbReference type="Pfam" id="PF00910">
    <property type="entry name" value="RNA_helicase"/>
    <property type="match status" value="1"/>
</dbReference>
<dbReference type="PRINTS" id="PR00918">
    <property type="entry name" value="CALICVIRUSNS"/>
</dbReference>
<dbReference type="SUPFAM" id="SSF56672">
    <property type="entry name" value="DNA/RNA polymerases"/>
    <property type="match status" value="1"/>
</dbReference>
<dbReference type="SUPFAM" id="SSF50494">
    <property type="entry name" value="Trypsin-like serine proteases"/>
    <property type="match status" value="1"/>
</dbReference>
<dbReference type="PROSITE" id="PS51874">
    <property type="entry name" value="PCV_3C_PRO"/>
    <property type="match status" value="1"/>
</dbReference>
<dbReference type="PROSITE" id="PS50507">
    <property type="entry name" value="RDRP_SSRNA_POS"/>
    <property type="match status" value="1"/>
</dbReference>
<dbReference type="PROSITE" id="PS51218">
    <property type="entry name" value="SF3_HELICASE_2"/>
    <property type="match status" value="1"/>
</dbReference>
<evidence type="ECO:0000250" key="1">
    <source>
        <dbReference type="UniProtKB" id="P03600"/>
    </source>
</evidence>
<evidence type="ECO:0000255" key="2"/>
<evidence type="ECO:0000255" key="3">
    <source>
        <dbReference type="PROSITE-ProRule" id="PRU00539"/>
    </source>
</evidence>
<evidence type="ECO:0000255" key="4">
    <source>
        <dbReference type="PROSITE-ProRule" id="PRU00551"/>
    </source>
</evidence>
<evidence type="ECO:0000255" key="5">
    <source>
        <dbReference type="PROSITE-ProRule" id="PRU01222"/>
    </source>
</evidence>
<keyword id="KW-0067">ATP-binding</keyword>
<keyword id="KW-0191">Covalent protein-RNA linkage</keyword>
<keyword id="KW-0347">Helicase</keyword>
<keyword id="KW-1035">Host cytoplasm</keyword>
<keyword id="KW-1038">Host endoplasmic reticulum</keyword>
<keyword id="KW-1043">Host membrane</keyword>
<keyword id="KW-0378">Hydrolase</keyword>
<keyword id="KW-0472">Membrane</keyword>
<keyword id="KW-0547">Nucleotide-binding</keyword>
<keyword id="KW-0548">Nucleotidyltransferase</keyword>
<keyword id="KW-0597">Phosphoprotein</keyword>
<keyword id="KW-0645">Protease</keyword>
<keyword id="KW-0696">RNA-directed RNA polymerase</keyword>
<keyword id="KW-0788">Thiol protease</keyword>
<keyword id="KW-0808">Transferase</keyword>
<keyword id="KW-0812">Transmembrane</keyword>
<keyword id="KW-1133">Transmembrane helix</keyword>
<keyword id="KW-0693">Viral RNA replication</keyword>
<accession>Q9WNW0</accession>
<name>POL1_BBWV2</name>
<comment type="function">
    <molecule>Picornain 3C-like protease</molecule>
    <text evidence="1">Thiol protease that cleaves the RNA1 and RNA2 polyproteins.</text>
</comment>
<comment type="function">
    <molecule>Viral genome-linked protein</molecule>
    <text evidence="1">Plays a role in RNA replication. It is covalently linked to the 5'terminus of both viral single-stranded RNA1 and RNA2 molecules.</text>
</comment>
<comment type="function">
    <molecule>Protease cofactor</molecule>
    <text evidence="1">Down-regulates the RNA1 polyprotein processing and enhances trans-cleavage of RNA2 polyproteins. The protease cofactor and the putative helicase seem to target the replication complexes to ER membranes. Their physical association causes the membrane rearrangement of host ER that may result in formation of the small membranous vesicles that are the site of viral RNA synthesis.</text>
</comment>
<comment type="function">
    <molecule>Putative helicase</molecule>
    <text evidence="1">The protease cofactor and the putative helicase seem to target the replication complexes to ER membranes. Their physical association causes the membrane rearrangement of host ER that may result in formation of the small membranous vesicles that are the site of viral RNA synthesis.</text>
</comment>
<comment type="function">
    <molecule>RNA-directed RNA polymerase</molecule>
    <text evidence="1">Replicates the viral genome.</text>
</comment>
<comment type="catalytic activity">
    <reaction evidence="3">
        <text>RNA(n) + a ribonucleoside 5'-triphosphate = RNA(n+1) + diphosphate</text>
        <dbReference type="Rhea" id="RHEA:21248"/>
        <dbReference type="Rhea" id="RHEA-COMP:14527"/>
        <dbReference type="Rhea" id="RHEA-COMP:17342"/>
        <dbReference type="ChEBI" id="CHEBI:33019"/>
        <dbReference type="ChEBI" id="CHEBI:61557"/>
        <dbReference type="ChEBI" id="CHEBI:140395"/>
        <dbReference type="EC" id="2.7.7.48"/>
    </reaction>
</comment>
<comment type="subcellular location">
    <molecule>Putative helicase</molecule>
    <subcellularLocation>
        <location evidence="1">Host membrane</location>
        <topology evidence="1">Single-pass membrane protein</topology>
    </subcellularLocation>
    <subcellularLocation>
        <location evidence="1">Host cytoplasm</location>
        <location evidence="1">Host perinuclear region</location>
    </subcellularLocation>
</comment>
<comment type="subcellular location">
    <molecule>RNA-directed RNA polymerase</molecule>
    <subcellularLocation>
        <location evidence="1">Host endoplasmic reticulum</location>
    </subcellularLocation>
</comment>
<comment type="subcellular location">
    <molecule>Protease cofactor</molecule>
    <subcellularLocation>
        <location evidence="1">Host cytoplasm</location>
        <location evidence="1">Host perinuclear region</location>
    </subcellularLocation>
</comment>
<comment type="PTM">
    <molecule>RNA1 polyprotein</molecule>
    <text evidence="1">Specific enzymatic cleavages by picornain 3C-like protease in vivo yield mature proteins. Picornain 3C-like protease is autocatalytically processed.</text>
</comment>
<comment type="PTM">
    <molecule>Viral genome-linked protein</molecule>
    <text evidence="1">Uridylylated by the polymerase and is covalently linked to the 5'-end of genomic RNA. This uridylylated form acts as a nucleotide-peptide primer for the polymerase.</text>
</comment>
<proteinExistence type="inferred from homology"/>
<feature type="chain" id="PRO_0000445857" description="RNA1 polyprotein">
    <location>
        <begin position="1"/>
        <end position="1870"/>
    </location>
</feature>
<feature type="chain" id="PRO_0000445858" description="Protease cofactor">
    <location>
        <begin position="1"/>
        <end position="346"/>
    </location>
</feature>
<feature type="chain" id="PRO_0000445859" description="Putative helicase">
    <location>
        <begin position="347"/>
        <end position="936"/>
    </location>
</feature>
<feature type="chain" id="PRO_0000445860" description="Viral genome-linked protein">
    <location>
        <begin position="937"/>
        <end position="962"/>
    </location>
</feature>
<feature type="chain" id="PRO_0000445861" description="Picornain 3C-like protease">
    <location>
        <begin position="963"/>
        <end position="1171"/>
    </location>
</feature>
<feature type="chain" id="PRO_0000445862" description="RNA-directed RNA polymerase">
    <location>
        <begin position="1172"/>
        <end position="1870"/>
    </location>
</feature>
<feature type="transmembrane region" description="Helical" evidence="2">
    <location>
        <begin position="910"/>
        <end position="930"/>
    </location>
</feature>
<feature type="domain" description="SF3 helicase" evidence="4">
    <location>
        <begin position="486"/>
        <end position="654"/>
    </location>
</feature>
<feature type="domain" description="Peptidase C3" evidence="5">
    <location>
        <begin position="963"/>
        <end position="1165"/>
    </location>
</feature>
<feature type="domain" description="RdRp catalytic" evidence="3">
    <location>
        <begin position="1445"/>
        <end position="1572"/>
    </location>
</feature>
<feature type="active site" description="For picornain 3C-like protease activity" evidence="5">
    <location>
        <position position="1003"/>
    </location>
</feature>
<feature type="active site" description="For picornain 3C-like protease activity" evidence="5">
    <location>
        <position position="1039"/>
    </location>
</feature>
<feature type="active site" description="For picornain 3C-like protease activity" evidence="5">
    <location>
        <position position="1128"/>
    </location>
</feature>
<feature type="binding site" evidence="4">
    <location>
        <begin position="515"/>
        <end position="522"/>
    </location>
    <ligand>
        <name>ATP</name>
        <dbReference type="ChEBI" id="CHEBI:30616"/>
    </ligand>
</feature>
<feature type="site" description="Cleavage; by viral protease" evidence="1">
    <location>
        <begin position="346"/>
        <end position="347"/>
    </location>
</feature>
<feature type="site" description="Cleavage; by viral protease" evidence="1">
    <location>
        <begin position="936"/>
        <end position="937"/>
    </location>
</feature>
<feature type="site" description="Cleavage; by viral protease" evidence="1">
    <location>
        <begin position="962"/>
        <end position="963"/>
    </location>
</feature>
<feature type="site" description="Cleavage; by viral protease" evidence="1">
    <location>
        <begin position="1171"/>
        <end position="1172"/>
    </location>
</feature>
<feature type="modified residue" description="O-(5'-phospho-RNA)-serine" evidence="1">
    <location>
        <position position="937"/>
    </location>
</feature>
<organism>
    <name type="scientific">Broad bean wilt virus 2</name>
    <name type="common">BBWV-2</name>
    <dbReference type="NCBI Taxonomy" id="76875"/>
    <lineage>
        <taxon>Viruses</taxon>
        <taxon>Riboviria</taxon>
        <taxon>Orthornavirae</taxon>
        <taxon>Pisuviricota</taxon>
        <taxon>Pisoniviricetes</taxon>
        <taxon>Picornavirales</taxon>
        <taxon>Secoviridae</taxon>
        <taxon>Comovirinae</taxon>
        <taxon>Fabavirus</taxon>
        <taxon>Fabavirus betaviciae</taxon>
    </lineage>
</organism>
<reference key="1">
    <citation type="journal article" date="2000" name="Virus Genes">
        <title>Complete nucleotide sequence and infectious cDNA clone of the RNA1 of a Chinese isolate of broad bean wilt virus 2.</title>
        <authorList>
            <person name="Qi Y."/>
            <person name="Zhou X."/>
            <person name="Li D."/>
        </authorList>
    </citation>
    <scope>NUCLEOTIDE SEQUENCE [GENOMIC RNA]</scope>
    <source>
        <strain>B935</strain>
    </source>
</reference>